<feature type="chain" id="PRO_0000181292" description="Acid-sensing ion channel 2">
    <location>
        <begin position="1"/>
        <end position="512"/>
    </location>
</feature>
<feature type="topological domain" description="Cytoplasmic" evidence="10">
    <location>
        <begin position="1"/>
        <end position="37"/>
    </location>
</feature>
<feature type="transmembrane region" description="Helical" evidence="4">
    <location>
        <begin position="38"/>
        <end position="58"/>
    </location>
</feature>
<feature type="topological domain" description="Extracellular" evidence="10">
    <location>
        <begin position="59"/>
        <end position="427"/>
    </location>
</feature>
<feature type="transmembrane region" description="Helical" evidence="4">
    <location>
        <begin position="428"/>
        <end position="448"/>
    </location>
</feature>
<feature type="topological domain" description="Cytoplasmic" evidence="10">
    <location>
        <begin position="449"/>
        <end position="512"/>
    </location>
</feature>
<feature type="short sequence motif" description="GAS motif; ion selectivity filter" evidence="1">
    <location>
        <begin position="441"/>
        <end position="443"/>
    </location>
</feature>
<feature type="modified residue" description="Phosphoserine" evidence="21">
    <location>
        <position position="8"/>
    </location>
</feature>
<feature type="modified residue" description="Phosphoserine" evidence="21">
    <location>
        <position position="11"/>
    </location>
</feature>
<feature type="glycosylation site" description="N-linked (GlcNAc...) asparagine" evidence="10">
    <location>
        <position position="365"/>
    </location>
</feature>
<feature type="glycosylation site" description="N-linked (GlcNAc...) asparagine" evidence="10">
    <location>
        <position position="392"/>
    </location>
</feature>
<feature type="disulfide bond" evidence="2">
    <location>
        <begin position="92"/>
        <end position="193"/>
    </location>
</feature>
<feature type="disulfide bond" evidence="2">
    <location>
        <begin position="289"/>
        <end position="364"/>
    </location>
</feature>
<feature type="disulfide bond" evidence="2">
    <location>
        <begin position="307"/>
        <end position="360"/>
    </location>
</feature>
<feature type="disulfide bond" evidence="2">
    <location>
        <begin position="311"/>
        <end position="358"/>
    </location>
</feature>
<feature type="disulfide bond" evidence="2">
    <location>
        <begin position="320"/>
        <end position="342"/>
    </location>
</feature>
<feature type="disulfide bond" evidence="2">
    <location>
        <begin position="322"/>
        <end position="334"/>
    </location>
</feature>
<feature type="splice variant" id="VSP_015594" description="In isoform 2." evidence="17">
    <location>
        <begin position="1"/>
        <end position="184"/>
    </location>
</feature>
<feature type="splice variant" id="VSP_015595" description="In isoform 2." evidence="17">
    <original>T</original>
    <variation>MSRSGGARLPATALSGPGRFRMAREQPAPVAVAAARQPGGDRSGDPALQGPGVARRGRPSLSRTKLHGLRHMCAGRTAAGGSFQRRALWVLAFCTSLGLLLSWSSNRLLYWLSFPSHTRVHREWSRQLPFPAVTVCNNNPLRFPRLSKGDLYYAGHWLGLLLPNRTARPLVSELLRGDEPRRQWFRKLADFRLFLPPRHFEGISAAFMDRLGHQLEDMLLSCKYRGELCGPHNFSS</variation>
    <location>
        <position position="185"/>
    </location>
</feature>
<feature type="mutagenesis site" description="No effect on N-glycosylation." evidence="10">
    <original>K</original>
    <variation>N</variation>
    <location>
        <position position="4"/>
    </location>
</feature>
<feature type="mutagenesis site" description="No effect on N-glycosylation." evidence="10">
    <original>N</original>
    <variation>S</variation>
    <location>
        <position position="22"/>
    </location>
</feature>
<feature type="mutagenesis site" description="No effect on N-glycosylation." evidence="10">
    <original>P</original>
    <variation>N</variation>
    <location>
        <position position="37"/>
    </location>
</feature>
<feature type="mutagenesis site" description="No effect on N-glycosylation." evidence="10">
    <original>R</original>
    <variation>N</variation>
    <location>
        <position position="63"/>
    </location>
</feature>
<feature type="mutagenesis site" description="No effect on N-glycosylation." evidence="10">
    <original>Y</original>
    <variation>N</variation>
    <location>
        <position position="67"/>
    </location>
</feature>
<feature type="mutagenesis site" description="Inactive. Active at lower pH; when associated with V-430." evidence="6 10">
    <original>H</original>
    <variation>A</variation>
    <location>
        <position position="72"/>
    </location>
</feature>
<feature type="mutagenesis site" description="Increases N-glycosylation." evidence="6 10">
    <original>H</original>
    <variation>N</variation>
    <location>
        <position position="72"/>
    </location>
</feature>
<feature type="mutagenesis site" description="Increases N-glycosylation." evidence="10">
    <original>A</original>
    <variation>N</variation>
    <location>
        <position position="81"/>
    </location>
</feature>
<feature type="mutagenesis site" description="No effect on pH dependence and function." evidence="6">
    <original>H</original>
    <variation>A</variation>
    <location>
        <position position="109"/>
    </location>
</feature>
<feature type="mutagenesis site" description="No effect on pH dependence and function." evidence="6">
    <original>H</original>
    <variation>A</variation>
    <location>
        <position position="127"/>
    </location>
</feature>
<feature type="mutagenesis site" description="No effect on pH dependence and function." evidence="6">
    <original>H</original>
    <variation>A</variation>
    <location>
        <position position="145"/>
    </location>
</feature>
<feature type="mutagenesis site" description="No effect on pH dependence and function." evidence="6">
    <original>H</original>
    <variation>A</variation>
    <location>
        <position position="158"/>
    </location>
</feature>
<feature type="mutagenesis site" description="Loss of potentiation by Zn(2+)." evidence="6">
    <original>H</original>
    <variation>A</variation>
    <location>
        <position position="162"/>
    </location>
</feature>
<feature type="mutagenesis site" description="No effect on pH dependence and function." evidence="6">
    <original>H</original>
    <variation>A</variation>
    <location>
        <position position="180"/>
    </location>
</feature>
<feature type="mutagenesis site" description="No effect on pH dependence and function." evidence="6">
    <original>H</original>
    <variation>A</variation>
    <location>
        <position position="249"/>
    </location>
</feature>
<feature type="mutagenesis site" description="No effect on pH dependence and function." evidence="6">
    <original>H</original>
    <variation>A</variation>
    <location>
        <position position="326"/>
    </location>
</feature>
<feature type="mutagenesis site" description="Loss of potentiation by Zn(2+)." evidence="6">
    <original>H</original>
    <variation>A</variation>
    <location>
        <position position="339"/>
    </location>
</feature>
<feature type="mutagenesis site" description="Reduces N-glycosylation. Abolishes N-glycosylation; when associated with S-392." evidence="10">
    <original>N</original>
    <variation>S</variation>
    <location>
        <position position="365"/>
    </location>
</feature>
<feature type="mutagenesis site" description="Reduces N-glycosylation. Abolishes N-glycosylation; when associated with S-365." evidence="10">
    <original>N</original>
    <variation>S</variation>
    <location>
        <position position="392"/>
    </location>
</feature>
<feature type="mutagenesis site" description="Increases N-glycosylation." evidence="10">
    <original>Y</original>
    <variation>N</variation>
    <location>
        <position position="414"/>
    </location>
</feature>
<feature type="mutagenesis site" description="Increases N-glycosylation." evidence="10">
    <original>YEV</original>
    <variation>NES</variation>
    <location>
        <begin position="423"/>
        <end position="425"/>
    </location>
</feature>
<feature type="mutagenesis site" description="Partial activation." evidence="6 13">
    <original>G</original>
    <variation>C</variation>
    <location>
        <position position="430"/>
    </location>
</feature>
<feature type="mutagenesis site" description="Constitutive activation causing cell death. Inactive; when associated with F-443." evidence="6 13">
    <original>G</original>
    <variation>F</variation>
    <location>
        <position position="430"/>
    </location>
</feature>
<feature type="mutagenesis site" description="Constitutive activation causing cell death." evidence="6 13">
    <original>G</original>
    <variation>K</variation>
    <variation>T</variation>
    <location>
        <position position="430"/>
    </location>
</feature>
<feature type="mutagenesis site" description="No constitutive activation." evidence="6 13">
    <original>G</original>
    <variation>S</variation>
    <location>
        <position position="430"/>
    </location>
</feature>
<feature type="mutagenesis site" description="Constitutive activation causing cell death. Activated at lower pH; when associated with A-72." evidence="6 13">
    <original>G</original>
    <variation>V</variation>
    <location>
        <position position="430"/>
    </location>
</feature>
<feature type="mutagenesis site" description="Loss of function. Inactive; when associated with F-430." evidence="13">
    <original>S</original>
    <variation>F</variation>
    <location>
        <position position="443"/>
    </location>
</feature>
<feature type="mutagenesis site" description="No effect on N-glycosylation." evidence="10">
    <original>YIY</original>
    <variation>NIS</variation>
    <location>
        <begin position="453"/>
        <end position="455"/>
    </location>
</feature>
<feature type="mutagenesis site" description="No effect on N-glycosylation." evidence="10">
    <original>N</original>
    <variation>S</variation>
    <location>
        <position position="478"/>
    </location>
</feature>
<feature type="mutagenesis site" description="No effect on N-glycosylation." evidence="10">
    <original>N</original>
    <variation>S</variation>
    <location>
        <position position="487"/>
    </location>
</feature>
<feature type="mutagenesis site" description="Reduces activation by PKC through PICK1 of ASIC2/ASIC2 channels." evidence="9">
    <original>S</original>
    <variation>G</variation>
    <location sequence="Q62962-2">
        <position position="60"/>
    </location>
</feature>
<feature type="mutagenesis site" description="Not constitutively activated." evidence="15">
    <original>G</original>
    <variation>F</variation>
    <variation>K</variation>
    <location sequence="Q62962-2">
        <position position="481"/>
    </location>
</feature>
<reference key="1">
    <citation type="journal article" date="1996" name="J. Biol. Chem.">
        <title>The mammalian degenerin MDEG, an amiloride-sensitive cation channel activated by mutations causing neurodegeneration in Caenorhabditis elegans.</title>
        <authorList>
            <person name="Waldmann R."/>
            <person name="Champigny G."/>
            <person name="Voilley N."/>
            <person name="Lauritzen I."/>
            <person name="Lazdunski M."/>
        </authorList>
    </citation>
    <scope>NUCLEOTIDE SEQUENCE [MRNA] (ISOFORM 1)</scope>
    <scope>FUNCTION</scope>
    <scope>TRANSPORTER ACTIVITY</scope>
    <scope>TISSUE SPECIFICITY</scope>
    <scope>MUTAGENESIS OF GLY-430 AND SER-443</scope>
    <source>
        <tissue>Brain</tissue>
    </source>
</reference>
<reference key="2">
    <citation type="journal article" date="1997" name="J. Biol. Chem.">
        <title>A modulatory subunit of acid sensing ion channels in brain and dorsal root ganglion cells.</title>
        <authorList>
            <person name="Lingueglia E."/>
            <person name="de Weille J.R."/>
            <person name="Bassilana F."/>
            <person name="Heurteaux C."/>
            <person name="Sakai H."/>
            <person name="Waldmann R."/>
            <person name="Lazdunski M."/>
        </authorList>
    </citation>
    <scope>NUCLEOTIDE SEQUENCE [MRNA] (ISOFORM 2)</scope>
    <scope>FUNCTION (ISOFORM 2)</scope>
    <scope>TRANSPORTER ACTIVITY</scope>
    <scope>ACTIVITY REGULATION</scope>
    <scope>SUBUNIT</scope>
    <scope>SUBCELLULAR LOCATION</scope>
    <scope>TISSUE SPECIFICITY</scope>
    <scope>MUTAGENESIS OF GLY-481 (ISOFORM 2)</scope>
    <source>
        <strain>Wistar</strain>
        <tissue>Brain</tissue>
    </source>
</reference>
<reference key="3">
    <citation type="journal article" date="1997" name="J. Biol. Chem.">
        <title>The acid-sensitive ionic channel subunit ASIC and the mammalian degenerin MDEG form a heteromultimeric H+-gated Na+ channel with novel properties.</title>
        <authorList>
            <person name="Bassilana F."/>
            <person name="Champigny G."/>
            <person name="Waldmann R."/>
            <person name="de Weille J.R."/>
            <person name="Heurteaux C."/>
            <person name="Lazdunski M."/>
        </authorList>
    </citation>
    <scope>FUNCTION</scope>
    <scope>TRANSPORTER ACTIVITY</scope>
    <scope>SUBUNIT</scope>
    <scope>TISSUE SPECIFICITY</scope>
</reference>
<reference key="4">
    <citation type="journal article" date="2000" name="J. Biol. Chem.">
        <title>Mammalian ASIC2a and ASIC3 subunits co-assemble into heteromeric proton-gated channels sensitive to Gd3+.</title>
        <authorList>
            <person name="Babinski K."/>
            <person name="Catarsi S."/>
            <person name="Biagini G."/>
            <person name="Seguela P."/>
        </authorList>
    </citation>
    <scope>FUNCTION</scope>
    <scope>TRANSPORTER ACTIVITY</scope>
    <scope>ACTIVITY REGULATION</scope>
    <scope>SUBUNIT</scope>
    <scope>SUBCELLULAR LOCATION</scope>
</reference>
<reference key="5">
    <citation type="journal article" date="2001" name="J. Biol. Chem.">
        <title>Zn2+ and H+ are coactivators of acid-sensing ion channels.</title>
        <authorList>
            <person name="Baron A."/>
            <person name="Schaefer L."/>
            <person name="Lingueglia E."/>
            <person name="Champigny G."/>
            <person name="Lazdunski M."/>
        </authorList>
    </citation>
    <scope>ACTIVITY REGULATION</scope>
    <scope>MUTAGENESIS OF HIS-72; HIS-109; HIS-127; HIS-145; HIS-158; HIS-162; HIS-180; HIS-249; HIS-326; HIS-339 AND GLY-430</scope>
</reference>
<reference key="6">
    <citation type="journal article" date="2001" name="J. Neurosci.">
        <title>Nonsteroid anti-inflammatory drugs inhibit both the activity and the inflammation-induced expression of acid-sensing ion channels in nociceptors.</title>
        <authorList>
            <person name="Voilley N."/>
            <person name="de Weille J.R."/>
            <person name="Mamet J."/>
            <person name="Lazdunski M."/>
        </authorList>
    </citation>
    <scope>INDUCTION</scope>
</reference>
<reference key="7">
    <citation type="journal article" date="2002" name="Proc. Natl. Acad. Sci. U.S.A.">
        <title>Functional implications of the localization and activity of acid-sensitive channels in rat peripheral nervous system.</title>
        <authorList>
            <person name="Alvarez de la Rosa D."/>
            <person name="Zhang P."/>
            <person name="Shao D."/>
            <person name="White F."/>
            <person name="Canessa C.M."/>
        </authorList>
    </citation>
    <scope>TISSUE SPECIFICITY</scope>
    <scope>SUBCELLULAR LOCATION</scope>
</reference>
<reference key="8">
    <citation type="journal article" date="2004" name="J. Biol. Chem.">
        <title>ASIC2b-dependent regulation of ASIC3, an essential acid-sensing ion channel subunit in sensory neurons via the partner protein PICK-1.</title>
        <authorList>
            <person name="Deval E."/>
            <person name="Salinas M."/>
            <person name="Baron A."/>
            <person name="Lingueglia E."/>
            <person name="Lazdunski M."/>
        </authorList>
    </citation>
    <scope>INTERACTION WITH PICK1</scope>
    <scope>MUTAGENESIS OF SER-60 (ISOFORM 2)</scope>
</reference>
<reference key="9">
    <citation type="journal article" date="2004" name="J. Biol. Chem.">
        <title>Analysis of the membrane topology of the acid-sensing ion channel 2a.</title>
        <authorList>
            <person name="Saugstad J.A."/>
            <person name="Roberts J.A."/>
            <person name="Dong J."/>
            <person name="Zeitouni S."/>
            <person name="Evans R.J."/>
        </authorList>
    </citation>
    <scope>SUBCELLULAR LOCATION</scope>
    <scope>TOPOLOGY</scope>
    <scope>GLYCOSYLATION AT ASN-365 AND ASN-392</scope>
    <scope>MUTAGENESIS OF LYS-4; ASN-22; PRO-37; ARG-63; TYR-67; HIS-72; ALA-81; ASN-365; ASN-392; TYR-414; 423-TYR--VAL-425; 453-TYR--TYR-455; ASN-478 AND ASN-487</scope>
</reference>
<reference key="10">
    <citation type="journal article" date="2012" name="EMBO J.">
        <title>A stomatin dimer modulates the activity of acid-sensing ion channels.</title>
        <authorList>
            <person name="Brand J."/>
            <person name="Smith E.S."/>
            <person name="Schwefel D."/>
            <person name="Lapatsina L."/>
            <person name="Poole K."/>
            <person name="Omerbasic D."/>
            <person name="Kozlenkov A."/>
            <person name="Behlke J."/>
            <person name="Lewin G.R."/>
            <person name="Daumke O."/>
        </authorList>
    </citation>
    <scope>FUNCTION</scope>
    <scope>INTERACTION WITH STOM</scope>
</reference>
<reference key="11">
    <citation type="journal article" date="2012" name="Nat. Commun.">
        <title>Quantitative maps of protein phosphorylation sites across 14 different rat organs and tissues.</title>
        <authorList>
            <person name="Lundby A."/>
            <person name="Secher A."/>
            <person name="Lage K."/>
            <person name="Nordsborg N.B."/>
            <person name="Dmytriyev A."/>
            <person name="Lundby C."/>
            <person name="Olsen J.V."/>
        </authorList>
    </citation>
    <scope>PHOSPHORYLATION [LARGE SCALE ANALYSIS] AT SER-8 AND SER-11</scope>
    <scope>IDENTIFICATION BY MASS SPECTROMETRY [LARGE SCALE ANALYSIS]</scope>
</reference>
<reference key="12">
    <citation type="journal article" date="2012" name="Nature">
        <title>Black mamba venom peptides target acid-sensing ion channels to abolish pain.</title>
        <authorList>
            <person name="Diochot S."/>
            <person name="Baron A."/>
            <person name="Salinas M."/>
            <person name="Douguet D."/>
            <person name="Scarzello S."/>
            <person name="Dabert-Gay A.-S."/>
            <person name="Debayle D."/>
            <person name="Friend V."/>
            <person name="Alloui A."/>
            <person name="Lazdunski M."/>
            <person name="Lingueglia E."/>
        </authorList>
    </citation>
    <scope>ACTIVITY REGULATION BY SNAKE VENOM MAMBALGIN-1 AND MAMBALGIN-2</scope>
    <source>
        <tissue>Venom</tissue>
        <tissue>Venom gland</tissue>
    </source>
</reference>
<gene>
    <name evidence="20" type="primary">Asic2</name>
    <name type="synonym">Accn1</name>
    <name evidence="17" type="synonym">Bnac1</name>
</gene>
<keyword id="KW-0025">Alternative splicing</keyword>
<keyword id="KW-1003">Cell membrane</keyword>
<keyword id="KW-1015">Disulfide bond</keyword>
<keyword id="KW-0325">Glycoprotein</keyword>
<keyword id="KW-0407">Ion channel</keyword>
<keyword id="KW-0406">Ion transport</keyword>
<keyword id="KW-0472">Membrane</keyword>
<keyword id="KW-0597">Phosphoprotein</keyword>
<keyword id="KW-1185">Reference proteome</keyword>
<keyword id="KW-0915">Sodium</keyword>
<keyword id="KW-0894">Sodium channel</keyword>
<keyword id="KW-0739">Sodium transport</keyword>
<keyword id="KW-0812">Transmembrane</keyword>
<keyword id="KW-1133">Transmembrane helix</keyword>
<keyword id="KW-0813">Transport</keyword>
<protein>
    <recommendedName>
        <fullName evidence="19">Acid-sensing ion channel 2</fullName>
        <shortName>ASIC2</shortName>
    </recommendedName>
    <alternativeName>
        <fullName>Amiloride-sensitive brain sodium channel</fullName>
    </alternativeName>
    <alternativeName>
        <fullName>Amiloride-sensitive brain sodium channel 2</fullName>
    </alternativeName>
    <alternativeName>
        <fullName>Amiloride-sensitive cation channel 1, neuronal</fullName>
    </alternativeName>
    <alternativeName>
        <fullName>Amiloride-sensitive cation channel neuronal 1</fullName>
    </alternativeName>
    <alternativeName>
        <fullName evidence="17">Brain sodium channel 1</fullName>
        <shortName>BNC1</shortName>
        <shortName evidence="17">BNaC1</shortName>
    </alternativeName>
    <alternativeName>
        <fullName evidence="16">Mammalian degenerin homolog</fullName>
        <shortName evidence="16">MDEG</shortName>
    </alternativeName>
</protein>
<dbReference type="EMBL" id="U53211">
    <property type="protein sequence ID" value="AAC52588.1"/>
    <property type="molecule type" value="mRNA"/>
</dbReference>
<dbReference type="EMBL" id="Y14635">
    <property type="protein sequence ID" value="CAA74979.1"/>
    <property type="molecule type" value="mRNA"/>
</dbReference>
<dbReference type="RefSeq" id="NP_001029186.1">
    <molecule id="Q62962-1"/>
    <property type="nucleotide sequence ID" value="NM_001034014.1"/>
</dbReference>
<dbReference type="RefSeq" id="NP_037024.2">
    <molecule id="Q62962-2"/>
    <property type="nucleotide sequence ID" value="NM_012892.2"/>
</dbReference>
<dbReference type="SMR" id="Q62962"/>
<dbReference type="DIP" id="DIP-41193N"/>
<dbReference type="FunCoup" id="Q62962">
    <property type="interactions" value="569"/>
</dbReference>
<dbReference type="IntAct" id="Q62962">
    <property type="interactions" value="1"/>
</dbReference>
<dbReference type="MINT" id="Q62962"/>
<dbReference type="STRING" id="10116.ENSRNOP00000068763"/>
<dbReference type="ChEMBL" id="CHEMBL3562171"/>
<dbReference type="TCDB" id="1.A.6.1.2">
    <property type="family name" value="the epithelial na(+) channel (enac) family"/>
</dbReference>
<dbReference type="GlyCosmos" id="Q62962">
    <property type="glycosylation" value="2 sites, No reported glycans"/>
</dbReference>
<dbReference type="GlyGen" id="Q62962">
    <property type="glycosylation" value="2 sites"/>
</dbReference>
<dbReference type="iPTMnet" id="Q62962"/>
<dbReference type="PhosphoSitePlus" id="Q62962"/>
<dbReference type="DNASU" id="25364"/>
<dbReference type="Ensembl" id="ENSRNOT00000086961.2">
    <molecule id="Q62962-2"/>
    <property type="protein sequence ID" value="ENSRNOP00000068763.2"/>
    <property type="gene ID" value="ENSRNOG00000058308.2"/>
</dbReference>
<dbReference type="Ensembl" id="ENSRNOT00000112270.1">
    <molecule id="Q62962-1"/>
    <property type="protein sequence ID" value="ENSRNOP00000080191.1"/>
    <property type="gene ID" value="ENSRNOG00000058308.2"/>
</dbReference>
<dbReference type="GeneID" id="25364"/>
<dbReference type="KEGG" id="rno:25364"/>
<dbReference type="AGR" id="RGD:2017"/>
<dbReference type="CTD" id="40"/>
<dbReference type="RGD" id="2017">
    <property type="gene designation" value="Asic2"/>
</dbReference>
<dbReference type="GeneTree" id="ENSGT00940000154991"/>
<dbReference type="InParanoid" id="Q62962"/>
<dbReference type="OMA" id="QGHCLRR"/>
<dbReference type="OrthoDB" id="5874059at2759"/>
<dbReference type="PhylomeDB" id="Q62962"/>
<dbReference type="TreeFam" id="TF330663"/>
<dbReference type="Reactome" id="R-RNO-2672351">
    <property type="pathway name" value="Stimuli-sensing channels"/>
</dbReference>
<dbReference type="PRO" id="PR:Q62962"/>
<dbReference type="Proteomes" id="UP000002494">
    <property type="component" value="Chromosome 10"/>
</dbReference>
<dbReference type="GO" id="GO:0043197">
    <property type="term" value="C:dendritic spine"/>
    <property type="evidence" value="ECO:0000266"/>
    <property type="project" value="RGD"/>
</dbReference>
<dbReference type="GO" id="GO:0016020">
    <property type="term" value="C:membrane"/>
    <property type="evidence" value="ECO:0000266"/>
    <property type="project" value="RGD"/>
</dbReference>
<dbReference type="GO" id="GO:0043005">
    <property type="term" value="C:neuron projection"/>
    <property type="evidence" value="ECO:0000266"/>
    <property type="project" value="RGD"/>
</dbReference>
<dbReference type="GO" id="GO:0043025">
    <property type="term" value="C:neuronal cell body"/>
    <property type="evidence" value="ECO:0000266"/>
    <property type="project" value="RGD"/>
</dbReference>
<dbReference type="GO" id="GO:0005886">
    <property type="term" value="C:plasma membrane"/>
    <property type="evidence" value="ECO:0000314"/>
    <property type="project" value="UniProtKB"/>
</dbReference>
<dbReference type="GO" id="GO:0098839">
    <property type="term" value="C:postsynaptic density membrane"/>
    <property type="evidence" value="ECO:0000266"/>
    <property type="project" value="RGD"/>
</dbReference>
<dbReference type="GO" id="GO:0045202">
    <property type="term" value="C:synapse"/>
    <property type="evidence" value="ECO:0000266"/>
    <property type="project" value="RGD"/>
</dbReference>
<dbReference type="GO" id="GO:0015280">
    <property type="term" value="F:ligand-gated sodium channel activity"/>
    <property type="evidence" value="ECO:0000266"/>
    <property type="project" value="RGD"/>
</dbReference>
<dbReference type="GO" id="GO:0005261">
    <property type="term" value="F:monoatomic cation channel activity"/>
    <property type="evidence" value="ECO:0000266"/>
    <property type="project" value="RGD"/>
</dbReference>
<dbReference type="GO" id="GO:0005216">
    <property type="term" value="F:monoatomic ion channel activity"/>
    <property type="evidence" value="ECO:0000314"/>
    <property type="project" value="RGD"/>
</dbReference>
<dbReference type="GO" id="GO:0022839">
    <property type="term" value="F:monoatomic ion-gated channel activity"/>
    <property type="evidence" value="ECO:0000266"/>
    <property type="project" value="RGD"/>
</dbReference>
<dbReference type="GO" id="GO:0160125">
    <property type="term" value="F:pH-gated sodium channel activity"/>
    <property type="evidence" value="ECO:0000314"/>
    <property type="project" value="UniProtKB"/>
</dbReference>
<dbReference type="GO" id="GO:0071468">
    <property type="term" value="P:cellular response to acidic pH"/>
    <property type="evidence" value="ECO:0000314"/>
    <property type="project" value="RGD"/>
</dbReference>
<dbReference type="GO" id="GO:0071466">
    <property type="term" value="P:cellular response to xenobiotic stimulus"/>
    <property type="evidence" value="ECO:0000314"/>
    <property type="project" value="RGD"/>
</dbReference>
<dbReference type="GO" id="GO:0050974">
    <property type="term" value="P:detection of mechanical stimulus involved in sensory perception"/>
    <property type="evidence" value="ECO:0000266"/>
    <property type="project" value="RGD"/>
</dbReference>
<dbReference type="GO" id="GO:0051649">
    <property type="term" value="P:establishment of localization in cell"/>
    <property type="evidence" value="ECO:0000266"/>
    <property type="project" value="RGD"/>
</dbReference>
<dbReference type="GO" id="GO:0006812">
    <property type="term" value="P:monoatomic cation transport"/>
    <property type="evidence" value="ECO:0000266"/>
    <property type="project" value="RGD"/>
</dbReference>
<dbReference type="GO" id="GO:0034220">
    <property type="term" value="P:monoatomic ion transmembrane transport"/>
    <property type="evidence" value="ECO:0000266"/>
    <property type="project" value="RGD"/>
</dbReference>
<dbReference type="GO" id="GO:0043066">
    <property type="term" value="P:negative regulation of apoptotic process"/>
    <property type="evidence" value="ECO:0000266"/>
    <property type="project" value="RGD"/>
</dbReference>
<dbReference type="GO" id="GO:0007602">
    <property type="term" value="P:phototransduction"/>
    <property type="evidence" value="ECO:0000266"/>
    <property type="project" value="RGD"/>
</dbReference>
<dbReference type="GO" id="GO:0051965">
    <property type="term" value="P:positive regulation of synapse assembly"/>
    <property type="evidence" value="ECO:0000266"/>
    <property type="project" value="RGD"/>
</dbReference>
<dbReference type="GO" id="GO:0035418">
    <property type="term" value="P:protein localization to synapse"/>
    <property type="evidence" value="ECO:0000266"/>
    <property type="project" value="RGD"/>
</dbReference>
<dbReference type="GO" id="GO:0042391">
    <property type="term" value="P:regulation of membrane potential"/>
    <property type="evidence" value="ECO:0000266"/>
    <property type="project" value="RGD"/>
</dbReference>
<dbReference type="GO" id="GO:0034765">
    <property type="term" value="P:regulation of monoatomic ion transmembrane transport"/>
    <property type="evidence" value="ECO:0000266"/>
    <property type="project" value="RGD"/>
</dbReference>
<dbReference type="GO" id="GO:0150052">
    <property type="term" value="P:regulation of postsynapse assembly"/>
    <property type="evidence" value="ECO:0000266"/>
    <property type="project" value="RGD"/>
</dbReference>
<dbReference type="GO" id="GO:0003026">
    <property type="term" value="P:regulation of systemic arterial blood pressure by aortic arch baroreceptor feedback"/>
    <property type="evidence" value="ECO:0000266"/>
    <property type="project" value="RGD"/>
</dbReference>
<dbReference type="GO" id="GO:0019229">
    <property type="term" value="P:regulation of vasoconstriction"/>
    <property type="evidence" value="ECO:0000266"/>
    <property type="project" value="RGD"/>
</dbReference>
<dbReference type="GO" id="GO:0010447">
    <property type="term" value="P:response to acidic pH"/>
    <property type="evidence" value="ECO:0000266"/>
    <property type="project" value="RGD"/>
</dbReference>
<dbReference type="GO" id="GO:0009612">
    <property type="term" value="P:response to mechanical stimulus"/>
    <property type="evidence" value="ECO:0000266"/>
    <property type="project" value="RGD"/>
</dbReference>
<dbReference type="GO" id="GO:0007605">
    <property type="term" value="P:sensory perception of sound"/>
    <property type="evidence" value="ECO:0000266"/>
    <property type="project" value="RGD"/>
</dbReference>
<dbReference type="GO" id="GO:0050915">
    <property type="term" value="P:sensory perception of sour taste"/>
    <property type="evidence" value="ECO:0000266"/>
    <property type="project" value="RGD"/>
</dbReference>
<dbReference type="GO" id="GO:0035725">
    <property type="term" value="P:sodium ion transmembrane transport"/>
    <property type="evidence" value="ECO:0000314"/>
    <property type="project" value="RGD"/>
</dbReference>
<dbReference type="GO" id="GO:0006814">
    <property type="term" value="P:sodium ion transport"/>
    <property type="evidence" value="ECO:0000266"/>
    <property type="project" value="RGD"/>
</dbReference>
<dbReference type="GO" id="GO:0007416">
    <property type="term" value="P:synapse assembly"/>
    <property type="evidence" value="ECO:0000266"/>
    <property type="project" value="RGD"/>
</dbReference>
<dbReference type="FunFam" id="1.10.287.820:FF:000001">
    <property type="entry name" value="acid-sensing ion channel 1 isoform X2"/>
    <property type="match status" value="1"/>
</dbReference>
<dbReference type="FunFam" id="1.10.3590.10:FF:000001">
    <property type="entry name" value="acid-sensing ion channel 1 isoform X2"/>
    <property type="match status" value="1"/>
</dbReference>
<dbReference type="FunFam" id="1.10.3590.10:FF:000002">
    <property type="entry name" value="acid-sensing ion channel 1 isoform X2"/>
    <property type="match status" value="1"/>
</dbReference>
<dbReference type="FunFam" id="1.10.287.770:FF:000006">
    <property type="entry name" value="acid-sensing ion channel 2"/>
    <property type="match status" value="1"/>
</dbReference>
<dbReference type="FunFam" id="1.10.287.770:FF:000001">
    <property type="entry name" value="Acid-sensing ion channel subunit 1"/>
    <property type="match status" value="1"/>
</dbReference>
<dbReference type="Gene3D" id="1.10.3590.10">
    <property type="entry name" value="acid-sensing ion channel 1 domain"/>
    <property type="match status" value="2"/>
</dbReference>
<dbReference type="Gene3D" id="1.10.287.820">
    <property type="entry name" value="Acid-sensing ion channel domain"/>
    <property type="match status" value="1"/>
</dbReference>
<dbReference type="Gene3D" id="1.10.287.770">
    <property type="entry name" value="YojJ-like"/>
    <property type="match status" value="2"/>
</dbReference>
<dbReference type="InterPro" id="IPR001873">
    <property type="entry name" value="ENaC"/>
</dbReference>
<dbReference type="InterPro" id="IPR004724">
    <property type="entry name" value="ENaC_chordates"/>
</dbReference>
<dbReference type="InterPro" id="IPR020903">
    <property type="entry name" value="ENaC_CS"/>
</dbReference>
<dbReference type="NCBIfam" id="TIGR00859">
    <property type="entry name" value="ENaC"/>
    <property type="match status" value="1"/>
</dbReference>
<dbReference type="PANTHER" id="PTHR11690:SF128">
    <property type="entry name" value="ACID-SENSING ION CHANNEL 2"/>
    <property type="match status" value="1"/>
</dbReference>
<dbReference type="PANTHER" id="PTHR11690">
    <property type="entry name" value="AMILORIDE-SENSITIVE SODIUM CHANNEL-RELATED"/>
    <property type="match status" value="1"/>
</dbReference>
<dbReference type="Pfam" id="PF00858">
    <property type="entry name" value="ASC"/>
    <property type="match status" value="1"/>
</dbReference>
<dbReference type="PRINTS" id="PR01078">
    <property type="entry name" value="AMINACHANNEL"/>
</dbReference>
<dbReference type="PROSITE" id="PS01206">
    <property type="entry name" value="ASC"/>
    <property type="match status" value="1"/>
</dbReference>
<comment type="function">
    <text evidence="3 5 11 13 14 15">Forms pH-gated trimeric sodium channels that act as postsynaptic excitatory sensors in the nervous system (PubMed:10842183, PubMed:22850675, PubMed:8631835, PubMed:9360943, PubMed:9368048). Upon extracellular acidification, these channels generate rapid, transient inward currents that fully desensitize (PubMed:10842183, PubMed:8631835, PubMed:9368048). Highly selective for sodium, they are permeable to other cations (PubMed:8631835). By forming heterotrimeric channels with ASIC1, could contribute to synaptic plasticity, learning, and memory. Additionally, as acid sensors at nerve terminals, plays a role in mechanosensation and phototransduction (By similarity).</text>
</comment>
<comment type="function">
    <molecule>Isoform 2</molecule>
    <text evidence="15">Has no pH-gated sodium channel activity per se but can associate with other ASICs to produce functional channels with specific properties.</text>
</comment>
<comment type="catalytic activity">
    <reaction evidence="5 13 14 15">
        <text>Na(+)(in) = Na(+)(out)</text>
        <dbReference type="Rhea" id="RHEA:34963"/>
        <dbReference type="ChEBI" id="CHEBI:29101"/>
    </reaction>
</comment>
<comment type="catalytic activity">
    <reaction evidence="13 14 15">
        <text>K(+)(in) = K(+)(out)</text>
        <dbReference type="Rhea" id="RHEA:29463"/>
        <dbReference type="ChEBI" id="CHEBI:29103"/>
    </reaction>
</comment>
<comment type="catalytic activity">
    <reaction evidence="13 14 15">
        <text>Li(+)(in) = Li(+)(out)</text>
        <dbReference type="Rhea" id="RHEA:78551"/>
        <dbReference type="ChEBI" id="CHEBI:49713"/>
    </reaction>
</comment>
<comment type="activity regulation">
    <text evidence="5 6 12 15">Inhibited by the diuretic drug amiloride (PubMed:10842183, PubMed:9368048). Inhibited by gadolinium ions, the heterotrimer with ASIC3 being more sensitive (PubMed:10842183). Zn(2+) potentiates the acid activation of ASIC2-containing homomeric and heteromeric channels (PubMed:11457851). The snake venom mambalgin-1 and mambalgin-2 inhibit the homotrimers composed of ASIC1 and ASIC2 and have strong analgesic effects (PubMed:23034652).</text>
</comment>
<comment type="subunit">
    <text evidence="3 5 9 11 14">Can form homotrimers (PubMed:10842183). Heterotrimer; forms functional heterotrimers producing channel with different properties (PubMed:10842183). Forms heterotrimers with ASIC1; while ASIC1 determines current amplitude, ASIC2 influences the properties of the current (By similarity). Forms heterotrimers with ASIC3; resulting in channels with distinct properties (PubMed:10842183, PubMed:9360943). Interacts with STOM; STOM regulates the gating of ASIC2-containing channels (PubMed:22850675). Interacts with PICK1; promotes ASIC3 phosphorylation by PKC and activation of ASIC2/ASIC3 heterotrimers (PubMed:14976185).</text>
</comment>
<comment type="interaction">
    <interactant intactId="EBI-15615798">
        <id>Q62962-1</id>
    </interactant>
    <interactant intactId="EBI-15615743">
        <id>D4A100</id>
        <label>Stoml3</label>
    </interactant>
    <organismsDiffer>false</organismsDiffer>
    <experiments>2</experiments>
</comment>
<comment type="interaction">
    <interactant intactId="EBI-15615759">
        <id>Q62962-2</id>
    </interactant>
    <interactant intactId="EBI-15615743">
        <id>D4A100</id>
        <label>Stoml3</label>
    </interactant>
    <organismsDiffer>false</organismsDiffer>
    <experiments>2</experiments>
</comment>
<comment type="subcellular location">
    <subcellularLocation>
        <location evidence="5 8 10">Cell membrane</location>
        <topology evidence="10">Multi-pass membrane protein</topology>
    </subcellularLocation>
    <text evidence="3">Localized at the plasma membrane of neurons, in the soma and punctated peripheral processes.</text>
</comment>
<comment type="alternative products">
    <event type="alternative splicing"/>
    <isoform>
        <id>Q62962-1</id>
        <name>1</name>
        <name evidence="17">MDEG1</name>
        <name>Asic2a</name>
        <sequence type="displayed"/>
    </isoform>
    <isoform>
        <id>Q62962-2</id>
        <name>2</name>
        <name evidence="17">MDEG2</name>
        <name>Asic2b</name>
        <sequence type="described" ref="VSP_015594 VSP_015595"/>
    </isoform>
</comment>
<comment type="tissue specificity">
    <text evidence="8 13 14 15">Expressed in sciatic nerve and dorsal root ganglion (DRG) (at protein level). Both isoforms display the same expression pattern except in DRG where isoform 2 is more abundantly expressed. Widely distributed throughout the brain. Highly expressed in the main olfactory bulb, neo- and allo-cortical regions, hippocampal formation, habenula, basolateral amygdaloid nuclei, and cerebellum. In the olfactory system, expressed in the glomerular cell layer, the internal granular layer, and the mitral and internal plexiform cell layers. Within the glomerular layer, restricted to the periglomerular cells. In the neocortex, strongly expressed in the large pyramidal neurons in all cortical layers as well as in the oligo-, astro-, or micro-glia cells. In the hippocampal formation, expressed in dentate granule cells and hilar neurons, as well as in pyramidal cells of CA1-CA3 subfields. Expressed in stratum oriens and radiatum of all subfields. Within the thalamus, expressed moderately in the medial and lateral habenula. In the cerebellar cortex expressed in Purkinje cells and granule cells. Expressed at low levels in choroid plexus.</text>
</comment>
<comment type="developmental stage">
    <text>Appears just before birth, reaches maximum levels after birth, then declines slightly until adulthood.</text>
</comment>
<comment type="induction">
    <text evidence="7">Up-regulation upon tissues inflammation is abolished by anti-inflammatory drugs.</text>
</comment>
<comment type="similarity">
    <text evidence="18">Belongs to the amiloride-sensitive sodium channel (TC 1.A.6) family. ASIC2 subfamily.</text>
</comment>
<evidence type="ECO:0000250" key="1">
    <source>
        <dbReference type="UniProtKB" id="P78348"/>
    </source>
</evidence>
<evidence type="ECO:0000250" key="2">
    <source>
        <dbReference type="UniProtKB" id="Q16515"/>
    </source>
</evidence>
<evidence type="ECO:0000250" key="3">
    <source>
        <dbReference type="UniProtKB" id="Q925H0"/>
    </source>
</evidence>
<evidence type="ECO:0000255" key="4"/>
<evidence type="ECO:0000269" key="5">
    <source>
    </source>
</evidence>
<evidence type="ECO:0000269" key="6">
    <source>
    </source>
</evidence>
<evidence type="ECO:0000269" key="7">
    <source>
    </source>
</evidence>
<evidence type="ECO:0000269" key="8">
    <source>
    </source>
</evidence>
<evidence type="ECO:0000269" key="9">
    <source>
    </source>
</evidence>
<evidence type="ECO:0000269" key="10">
    <source>
    </source>
</evidence>
<evidence type="ECO:0000269" key="11">
    <source>
    </source>
</evidence>
<evidence type="ECO:0000269" key="12">
    <source>
    </source>
</evidence>
<evidence type="ECO:0000269" key="13">
    <source>
    </source>
</evidence>
<evidence type="ECO:0000269" key="14">
    <source>
    </source>
</evidence>
<evidence type="ECO:0000269" key="15">
    <source>
    </source>
</evidence>
<evidence type="ECO:0000303" key="16">
    <source>
    </source>
</evidence>
<evidence type="ECO:0000303" key="17">
    <source>
    </source>
</evidence>
<evidence type="ECO:0000305" key="18"/>
<evidence type="ECO:0000305" key="19">
    <source>
    </source>
</evidence>
<evidence type="ECO:0000312" key="20">
    <source>
        <dbReference type="RGD" id="2017"/>
    </source>
</evidence>
<evidence type="ECO:0007744" key="21">
    <source>
    </source>
</evidence>
<accession>Q62962</accession>
<accession>O55163</accession>
<name>ASIC2_RAT</name>
<sequence>MDLKESPSEGSLQPSSIQIFANTSTLHGIRHIFVYGPLTIRRVLWAVAFVGSLGLLLVESSERVSYYFSYQHVTKVDEVVAQSLVFPAVTLCNLNGFRFSRLTTNDLYHAGELLALLDVNLQIPDPHLADPTVLEALRQKANFKHYKPKQFSMLEFLHRVGHDLKDMMLYCKFKGQECGHQDFTTVFTKYGKCYMFNSGEDGKPLLTTVKGGTGNGLEIMLDIQQDEYLPIWGETEETTFEAGVKVQIHSQSEPPFIQELGFGVAPGFQTFVATQEQRLTYLPPPWGECRSSEMGLDFFPVYSITACRIDCETRYIVENCNCRMVHMPGDAPFCTPEQHKECAEPALGLLAEKDSNYCLCRTPCNLTRYNKELSMVKIPSKTSAKYLEKKFNKSEKYISENILVLDIFFEALNYETIEQKKAYEVAALLGDIGGQMGLFIGASLLTILELFDYIYELIKEKLLDLLGKEEEEGSHDENMSTCDTMPNHSETISHTVNVPLQTALGTLEEIAC</sequence>
<organism>
    <name type="scientific">Rattus norvegicus</name>
    <name type="common">Rat</name>
    <dbReference type="NCBI Taxonomy" id="10116"/>
    <lineage>
        <taxon>Eukaryota</taxon>
        <taxon>Metazoa</taxon>
        <taxon>Chordata</taxon>
        <taxon>Craniata</taxon>
        <taxon>Vertebrata</taxon>
        <taxon>Euteleostomi</taxon>
        <taxon>Mammalia</taxon>
        <taxon>Eutheria</taxon>
        <taxon>Euarchontoglires</taxon>
        <taxon>Glires</taxon>
        <taxon>Rodentia</taxon>
        <taxon>Myomorpha</taxon>
        <taxon>Muroidea</taxon>
        <taxon>Muridae</taxon>
        <taxon>Murinae</taxon>
        <taxon>Rattus</taxon>
    </lineage>
</organism>
<proteinExistence type="evidence at protein level"/>